<accession>Q0HXV6</accession>
<gene>
    <name evidence="1" type="primary">lipB</name>
    <name type="ordered locus">Shewmr7_1050</name>
</gene>
<evidence type="ECO:0000255" key="1">
    <source>
        <dbReference type="HAMAP-Rule" id="MF_00013"/>
    </source>
</evidence>
<evidence type="ECO:0000255" key="2">
    <source>
        <dbReference type="PROSITE-ProRule" id="PRU01067"/>
    </source>
</evidence>
<sequence>MQDTTLHIRHLGQQDYESVWHAMQHYTDTRNSDSPDELWIVEHPPVFTQGQAGKSEHILNPGDIPVIQVDRGGQVTYHGPGQLVVYPLLDIKRSKIGVRQLVTHIEQSIIDMLAKYDINAYAKADAPGVYVDERKVASLGLRIRKGCSFHGLALNVDMDLAPFRRINPCGYAGLEMVQCKELGGPQTVIEAGDQLIITLSQLLGYQQLVHHQGLAAS</sequence>
<reference key="1">
    <citation type="submission" date="2006-08" db="EMBL/GenBank/DDBJ databases">
        <title>Complete sequence of chromosome 1 of Shewanella sp. MR-7.</title>
        <authorList>
            <person name="Copeland A."/>
            <person name="Lucas S."/>
            <person name="Lapidus A."/>
            <person name="Barry K."/>
            <person name="Detter J.C."/>
            <person name="Glavina del Rio T."/>
            <person name="Hammon N."/>
            <person name="Israni S."/>
            <person name="Dalin E."/>
            <person name="Tice H."/>
            <person name="Pitluck S."/>
            <person name="Kiss H."/>
            <person name="Brettin T."/>
            <person name="Bruce D."/>
            <person name="Han C."/>
            <person name="Tapia R."/>
            <person name="Gilna P."/>
            <person name="Schmutz J."/>
            <person name="Larimer F."/>
            <person name="Land M."/>
            <person name="Hauser L."/>
            <person name="Kyrpides N."/>
            <person name="Mikhailova N."/>
            <person name="Nealson K."/>
            <person name="Konstantinidis K."/>
            <person name="Klappenbach J."/>
            <person name="Tiedje J."/>
            <person name="Richardson P."/>
        </authorList>
    </citation>
    <scope>NUCLEOTIDE SEQUENCE [LARGE SCALE GENOMIC DNA]</scope>
    <source>
        <strain>MR-7</strain>
    </source>
</reference>
<protein>
    <recommendedName>
        <fullName evidence="1">Octanoyltransferase</fullName>
        <ecNumber evidence="1">2.3.1.181</ecNumber>
    </recommendedName>
    <alternativeName>
        <fullName evidence="1">Lipoate-protein ligase B</fullName>
    </alternativeName>
    <alternativeName>
        <fullName evidence="1">Lipoyl/octanoyl transferase</fullName>
    </alternativeName>
    <alternativeName>
        <fullName evidence="1">Octanoyl-[acyl-carrier-protein]-protein N-octanoyltransferase</fullName>
    </alternativeName>
</protein>
<name>LIPB_SHESR</name>
<dbReference type="EC" id="2.3.1.181" evidence="1"/>
<dbReference type="EMBL" id="CP000444">
    <property type="protein sequence ID" value="ABI42049.1"/>
    <property type="molecule type" value="Genomic_DNA"/>
</dbReference>
<dbReference type="SMR" id="Q0HXV6"/>
<dbReference type="KEGG" id="shm:Shewmr7_1050"/>
<dbReference type="HOGENOM" id="CLU_035168_3_1_6"/>
<dbReference type="UniPathway" id="UPA00538">
    <property type="reaction ID" value="UER00592"/>
</dbReference>
<dbReference type="GO" id="GO:0005737">
    <property type="term" value="C:cytoplasm"/>
    <property type="evidence" value="ECO:0007669"/>
    <property type="project" value="UniProtKB-SubCell"/>
</dbReference>
<dbReference type="GO" id="GO:0033819">
    <property type="term" value="F:lipoyl(octanoyl) transferase activity"/>
    <property type="evidence" value="ECO:0007669"/>
    <property type="project" value="UniProtKB-EC"/>
</dbReference>
<dbReference type="GO" id="GO:0036211">
    <property type="term" value="P:protein modification process"/>
    <property type="evidence" value="ECO:0007669"/>
    <property type="project" value="InterPro"/>
</dbReference>
<dbReference type="CDD" id="cd16444">
    <property type="entry name" value="LipB"/>
    <property type="match status" value="1"/>
</dbReference>
<dbReference type="FunFam" id="3.30.930.10:FF:000020">
    <property type="entry name" value="Octanoyltransferase"/>
    <property type="match status" value="1"/>
</dbReference>
<dbReference type="Gene3D" id="3.30.930.10">
    <property type="entry name" value="Bira Bifunctional Protein, Domain 2"/>
    <property type="match status" value="1"/>
</dbReference>
<dbReference type="HAMAP" id="MF_00013">
    <property type="entry name" value="LipB"/>
    <property type="match status" value="1"/>
</dbReference>
<dbReference type="InterPro" id="IPR045864">
    <property type="entry name" value="aa-tRNA-synth_II/BPL/LPL"/>
</dbReference>
<dbReference type="InterPro" id="IPR004143">
    <property type="entry name" value="BPL_LPL_catalytic"/>
</dbReference>
<dbReference type="InterPro" id="IPR000544">
    <property type="entry name" value="Octanoyltransferase"/>
</dbReference>
<dbReference type="InterPro" id="IPR020605">
    <property type="entry name" value="Octanoyltransferase_CS"/>
</dbReference>
<dbReference type="NCBIfam" id="TIGR00214">
    <property type="entry name" value="lipB"/>
    <property type="match status" value="1"/>
</dbReference>
<dbReference type="NCBIfam" id="NF010922">
    <property type="entry name" value="PRK14342.1"/>
    <property type="match status" value="1"/>
</dbReference>
<dbReference type="PANTHER" id="PTHR10993:SF7">
    <property type="entry name" value="LIPOYLTRANSFERASE 2, MITOCHONDRIAL-RELATED"/>
    <property type="match status" value="1"/>
</dbReference>
<dbReference type="PANTHER" id="PTHR10993">
    <property type="entry name" value="OCTANOYLTRANSFERASE"/>
    <property type="match status" value="1"/>
</dbReference>
<dbReference type="Pfam" id="PF21948">
    <property type="entry name" value="LplA-B_cat"/>
    <property type="match status" value="1"/>
</dbReference>
<dbReference type="PIRSF" id="PIRSF016262">
    <property type="entry name" value="LPLase"/>
    <property type="match status" value="1"/>
</dbReference>
<dbReference type="SUPFAM" id="SSF55681">
    <property type="entry name" value="Class II aaRS and biotin synthetases"/>
    <property type="match status" value="1"/>
</dbReference>
<dbReference type="PROSITE" id="PS51733">
    <property type="entry name" value="BPL_LPL_CATALYTIC"/>
    <property type="match status" value="1"/>
</dbReference>
<dbReference type="PROSITE" id="PS01313">
    <property type="entry name" value="LIPB"/>
    <property type="match status" value="1"/>
</dbReference>
<keyword id="KW-0012">Acyltransferase</keyword>
<keyword id="KW-0963">Cytoplasm</keyword>
<keyword id="KW-0808">Transferase</keyword>
<proteinExistence type="inferred from homology"/>
<organism>
    <name type="scientific">Shewanella sp. (strain MR-7)</name>
    <dbReference type="NCBI Taxonomy" id="60481"/>
    <lineage>
        <taxon>Bacteria</taxon>
        <taxon>Pseudomonadati</taxon>
        <taxon>Pseudomonadota</taxon>
        <taxon>Gammaproteobacteria</taxon>
        <taxon>Alteromonadales</taxon>
        <taxon>Shewanellaceae</taxon>
        <taxon>Shewanella</taxon>
    </lineage>
</organism>
<comment type="function">
    <text evidence="1">Catalyzes the transfer of endogenously produced octanoic acid from octanoyl-acyl-carrier-protein onto the lipoyl domains of lipoate-dependent enzymes. Lipoyl-ACP can also act as a substrate although octanoyl-ACP is likely to be the physiological substrate.</text>
</comment>
<comment type="catalytic activity">
    <reaction evidence="1">
        <text>octanoyl-[ACP] + L-lysyl-[protein] = N(6)-octanoyl-L-lysyl-[protein] + holo-[ACP] + H(+)</text>
        <dbReference type="Rhea" id="RHEA:17665"/>
        <dbReference type="Rhea" id="RHEA-COMP:9636"/>
        <dbReference type="Rhea" id="RHEA-COMP:9685"/>
        <dbReference type="Rhea" id="RHEA-COMP:9752"/>
        <dbReference type="Rhea" id="RHEA-COMP:9928"/>
        <dbReference type="ChEBI" id="CHEBI:15378"/>
        <dbReference type="ChEBI" id="CHEBI:29969"/>
        <dbReference type="ChEBI" id="CHEBI:64479"/>
        <dbReference type="ChEBI" id="CHEBI:78463"/>
        <dbReference type="ChEBI" id="CHEBI:78809"/>
        <dbReference type="EC" id="2.3.1.181"/>
    </reaction>
</comment>
<comment type="pathway">
    <text evidence="1">Protein modification; protein lipoylation via endogenous pathway; protein N(6)-(lipoyl)lysine from octanoyl-[acyl-carrier-protein]: step 1/2.</text>
</comment>
<comment type="subcellular location">
    <subcellularLocation>
        <location evidence="1">Cytoplasm</location>
    </subcellularLocation>
</comment>
<comment type="miscellaneous">
    <text evidence="1">In the reaction, the free carboxyl group of octanoic acid is attached via an amide linkage to the epsilon-amino group of a specific lysine residue of lipoyl domains of lipoate-dependent enzymes.</text>
</comment>
<comment type="similarity">
    <text evidence="1">Belongs to the LipB family.</text>
</comment>
<feature type="chain" id="PRO_1000001134" description="Octanoyltransferase">
    <location>
        <begin position="1"/>
        <end position="217"/>
    </location>
</feature>
<feature type="domain" description="BPL/LPL catalytic" evidence="2">
    <location>
        <begin position="32"/>
        <end position="207"/>
    </location>
</feature>
<feature type="active site" description="Acyl-thioester intermediate" evidence="1">
    <location>
        <position position="169"/>
    </location>
</feature>
<feature type="binding site" evidence="1">
    <location>
        <begin position="71"/>
        <end position="78"/>
    </location>
    <ligand>
        <name>substrate</name>
    </ligand>
</feature>
<feature type="binding site" evidence="1">
    <location>
        <begin position="138"/>
        <end position="140"/>
    </location>
    <ligand>
        <name>substrate</name>
    </ligand>
</feature>
<feature type="binding site" evidence="1">
    <location>
        <begin position="151"/>
        <end position="153"/>
    </location>
    <ligand>
        <name>substrate</name>
    </ligand>
</feature>
<feature type="site" description="Lowers pKa of active site Cys" evidence="1">
    <location>
        <position position="135"/>
    </location>
</feature>